<gene>
    <name evidence="1" type="primary">hutU</name>
    <name type="ordered locus">SeAg_B0826</name>
</gene>
<proteinExistence type="inferred from homology"/>
<dbReference type="EC" id="4.2.1.49" evidence="1"/>
<dbReference type="EMBL" id="CP001138">
    <property type="protein sequence ID" value="ACH52026.1"/>
    <property type="molecule type" value="Genomic_DNA"/>
</dbReference>
<dbReference type="RefSeq" id="WP_001115217.1">
    <property type="nucleotide sequence ID" value="NC_011149.1"/>
</dbReference>
<dbReference type="SMR" id="B5F068"/>
<dbReference type="KEGG" id="sea:SeAg_B0826"/>
<dbReference type="HOGENOM" id="CLU_018868_0_1_6"/>
<dbReference type="UniPathway" id="UPA00379">
    <property type="reaction ID" value="UER00550"/>
</dbReference>
<dbReference type="Proteomes" id="UP000008819">
    <property type="component" value="Chromosome"/>
</dbReference>
<dbReference type="GO" id="GO:0005737">
    <property type="term" value="C:cytoplasm"/>
    <property type="evidence" value="ECO:0007669"/>
    <property type="project" value="UniProtKB-SubCell"/>
</dbReference>
<dbReference type="GO" id="GO:0016153">
    <property type="term" value="F:urocanate hydratase activity"/>
    <property type="evidence" value="ECO:0007669"/>
    <property type="project" value="UniProtKB-UniRule"/>
</dbReference>
<dbReference type="GO" id="GO:0019556">
    <property type="term" value="P:L-histidine catabolic process to glutamate and formamide"/>
    <property type="evidence" value="ECO:0007669"/>
    <property type="project" value="UniProtKB-UniPathway"/>
</dbReference>
<dbReference type="GO" id="GO:0019557">
    <property type="term" value="P:L-histidine catabolic process to glutamate and formate"/>
    <property type="evidence" value="ECO:0007669"/>
    <property type="project" value="UniProtKB-UniPathway"/>
</dbReference>
<dbReference type="FunFam" id="3.40.50.10730:FF:000001">
    <property type="entry name" value="Urocanate hydratase"/>
    <property type="match status" value="1"/>
</dbReference>
<dbReference type="Gene3D" id="3.40.50.10730">
    <property type="entry name" value="Urocanase like domains"/>
    <property type="match status" value="1"/>
</dbReference>
<dbReference type="Gene3D" id="3.40.1770.10">
    <property type="entry name" value="Urocanase superfamily"/>
    <property type="match status" value="1"/>
</dbReference>
<dbReference type="HAMAP" id="MF_00577">
    <property type="entry name" value="HutU"/>
    <property type="match status" value="1"/>
</dbReference>
<dbReference type="InterPro" id="IPR055351">
    <property type="entry name" value="Urocanase"/>
</dbReference>
<dbReference type="InterPro" id="IPR023637">
    <property type="entry name" value="Urocanase-like"/>
</dbReference>
<dbReference type="InterPro" id="IPR035401">
    <property type="entry name" value="Urocanase_C"/>
</dbReference>
<dbReference type="InterPro" id="IPR038364">
    <property type="entry name" value="Urocanase_central_sf"/>
</dbReference>
<dbReference type="InterPro" id="IPR023636">
    <property type="entry name" value="Urocanase_CS"/>
</dbReference>
<dbReference type="InterPro" id="IPR035400">
    <property type="entry name" value="Urocanase_N"/>
</dbReference>
<dbReference type="InterPro" id="IPR035085">
    <property type="entry name" value="Urocanase_Rossmann-like"/>
</dbReference>
<dbReference type="InterPro" id="IPR036190">
    <property type="entry name" value="Urocanase_sf"/>
</dbReference>
<dbReference type="NCBIfam" id="TIGR01228">
    <property type="entry name" value="hutU"/>
    <property type="match status" value="1"/>
</dbReference>
<dbReference type="NCBIfam" id="NF003820">
    <property type="entry name" value="PRK05414.1"/>
    <property type="match status" value="1"/>
</dbReference>
<dbReference type="PANTHER" id="PTHR12216">
    <property type="entry name" value="UROCANATE HYDRATASE"/>
    <property type="match status" value="1"/>
</dbReference>
<dbReference type="PANTHER" id="PTHR12216:SF4">
    <property type="entry name" value="UROCANATE HYDRATASE"/>
    <property type="match status" value="1"/>
</dbReference>
<dbReference type="Pfam" id="PF01175">
    <property type="entry name" value="Urocanase"/>
    <property type="match status" value="1"/>
</dbReference>
<dbReference type="Pfam" id="PF17392">
    <property type="entry name" value="Urocanase_C"/>
    <property type="match status" value="1"/>
</dbReference>
<dbReference type="Pfam" id="PF17391">
    <property type="entry name" value="Urocanase_N"/>
    <property type="match status" value="1"/>
</dbReference>
<dbReference type="PIRSF" id="PIRSF001423">
    <property type="entry name" value="Urocanate_hydrat"/>
    <property type="match status" value="1"/>
</dbReference>
<dbReference type="SUPFAM" id="SSF111326">
    <property type="entry name" value="Urocanase"/>
    <property type="match status" value="1"/>
</dbReference>
<dbReference type="PROSITE" id="PS01233">
    <property type="entry name" value="UROCANASE"/>
    <property type="match status" value="1"/>
</dbReference>
<keyword id="KW-0963">Cytoplasm</keyword>
<keyword id="KW-0369">Histidine metabolism</keyword>
<keyword id="KW-0456">Lyase</keyword>
<keyword id="KW-0520">NAD</keyword>
<protein>
    <recommendedName>
        <fullName evidence="1">Urocanate hydratase</fullName>
        <shortName evidence="1">Urocanase</shortName>
        <ecNumber evidence="1">4.2.1.49</ecNumber>
    </recommendedName>
    <alternativeName>
        <fullName evidence="1">Imidazolonepropionate hydrolase</fullName>
    </alternativeName>
</protein>
<sequence length="561" mass="61466">MPESKYRQQTIRAPRGTVLTAKSWLTEAPLRMLMNNLDPDVAENPHELVVYGGIGRAARNWECYDAIVDALTRLEADETLLIQSGKPVGVFKTHDNAPRVLIANSNLVPHWATWEHFNELDAKGLAMYGQMTAGSWIYIGSQGIVQGTYETFVEAGRQHYNGTLAGRWVLTAGLGGMGGAQPLAATLAGACSLTIECQQSRIDFRLRTRYVDEQAATLDDALARITRYTREGKAVSVALCANAADILPELVNRGVRPDLVTDQTSAHDPLHGYLPSGWRWEEYQKNAQSDPHGTMQAAKRSMAAHVRAMLAFSQMGVPTFDYGNNIRQMAKEMGVENAFDFPGFVPAYIRPLFCRGIGPFRWVALSGDPQDIYKTDAKVKEIVAEDKHLHHWLDMARERIHFQGLPARICWVGLEWRQKLGLAFNEMVRCGEVSAPIVIGRDHLDSGSVASPNRETEAMRDGSDAVSDWPLLNALLNTASGATWVSLHHGGGVGMGFSQHAGMVIVCDGTDEAAARIRRVLHNDPATGVMRHADAGYDLAVECAVEQGLNLPMVAATQGKG</sequence>
<comment type="function">
    <text evidence="1">Catalyzes the conversion of urocanate to 4-imidazolone-5-propionate.</text>
</comment>
<comment type="catalytic activity">
    <reaction evidence="1">
        <text>4-imidazolone-5-propanoate = trans-urocanate + H2O</text>
        <dbReference type="Rhea" id="RHEA:13101"/>
        <dbReference type="ChEBI" id="CHEBI:15377"/>
        <dbReference type="ChEBI" id="CHEBI:17771"/>
        <dbReference type="ChEBI" id="CHEBI:77893"/>
        <dbReference type="EC" id="4.2.1.49"/>
    </reaction>
</comment>
<comment type="cofactor">
    <cofactor evidence="1">
        <name>NAD(+)</name>
        <dbReference type="ChEBI" id="CHEBI:57540"/>
    </cofactor>
    <text evidence="1">Binds 1 NAD(+) per subunit.</text>
</comment>
<comment type="pathway">
    <text evidence="1">Amino-acid degradation; L-histidine degradation into L-glutamate; N-formimidoyl-L-glutamate from L-histidine: step 2/3.</text>
</comment>
<comment type="subcellular location">
    <subcellularLocation>
        <location evidence="1">Cytoplasm</location>
    </subcellularLocation>
</comment>
<comment type="similarity">
    <text evidence="1">Belongs to the urocanase family.</text>
</comment>
<evidence type="ECO:0000255" key="1">
    <source>
        <dbReference type="HAMAP-Rule" id="MF_00577"/>
    </source>
</evidence>
<accession>B5F068</accession>
<organism>
    <name type="scientific">Salmonella agona (strain SL483)</name>
    <dbReference type="NCBI Taxonomy" id="454166"/>
    <lineage>
        <taxon>Bacteria</taxon>
        <taxon>Pseudomonadati</taxon>
        <taxon>Pseudomonadota</taxon>
        <taxon>Gammaproteobacteria</taxon>
        <taxon>Enterobacterales</taxon>
        <taxon>Enterobacteriaceae</taxon>
        <taxon>Salmonella</taxon>
    </lineage>
</organism>
<reference key="1">
    <citation type="journal article" date="2011" name="J. Bacteriol.">
        <title>Comparative genomics of 28 Salmonella enterica isolates: evidence for CRISPR-mediated adaptive sublineage evolution.</title>
        <authorList>
            <person name="Fricke W.F."/>
            <person name="Mammel M.K."/>
            <person name="McDermott P.F."/>
            <person name="Tartera C."/>
            <person name="White D.G."/>
            <person name="Leclerc J.E."/>
            <person name="Ravel J."/>
            <person name="Cebula T.A."/>
        </authorList>
    </citation>
    <scope>NUCLEOTIDE SEQUENCE [LARGE SCALE GENOMIC DNA]</scope>
    <source>
        <strain>SL483</strain>
    </source>
</reference>
<feature type="chain" id="PRO_1000129569" description="Urocanate hydratase">
    <location>
        <begin position="1"/>
        <end position="561"/>
    </location>
</feature>
<feature type="active site" evidence="1">
    <location>
        <position position="410"/>
    </location>
</feature>
<feature type="binding site" evidence="1">
    <location>
        <begin position="52"/>
        <end position="53"/>
    </location>
    <ligand>
        <name>NAD(+)</name>
        <dbReference type="ChEBI" id="CHEBI:57540"/>
    </ligand>
</feature>
<feature type="binding site" evidence="1">
    <location>
        <position position="130"/>
    </location>
    <ligand>
        <name>NAD(+)</name>
        <dbReference type="ChEBI" id="CHEBI:57540"/>
    </ligand>
</feature>
<feature type="binding site" evidence="1">
    <location>
        <begin position="176"/>
        <end position="178"/>
    </location>
    <ligand>
        <name>NAD(+)</name>
        <dbReference type="ChEBI" id="CHEBI:57540"/>
    </ligand>
</feature>
<feature type="binding site" evidence="1">
    <location>
        <position position="196"/>
    </location>
    <ligand>
        <name>NAD(+)</name>
        <dbReference type="ChEBI" id="CHEBI:57540"/>
    </ligand>
</feature>
<feature type="binding site" evidence="1">
    <location>
        <position position="201"/>
    </location>
    <ligand>
        <name>NAD(+)</name>
        <dbReference type="ChEBI" id="CHEBI:57540"/>
    </ligand>
</feature>
<feature type="binding site" evidence="1">
    <location>
        <begin position="242"/>
        <end position="243"/>
    </location>
    <ligand>
        <name>NAD(+)</name>
        <dbReference type="ChEBI" id="CHEBI:57540"/>
    </ligand>
</feature>
<feature type="binding site" evidence="1">
    <location>
        <begin position="263"/>
        <end position="267"/>
    </location>
    <ligand>
        <name>NAD(+)</name>
        <dbReference type="ChEBI" id="CHEBI:57540"/>
    </ligand>
</feature>
<feature type="binding site" evidence="1">
    <location>
        <begin position="273"/>
        <end position="274"/>
    </location>
    <ligand>
        <name>NAD(+)</name>
        <dbReference type="ChEBI" id="CHEBI:57540"/>
    </ligand>
</feature>
<feature type="binding site" evidence="1">
    <location>
        <position position="322"/>
    </location>
    <ligand>
        <name>NAD(+)</name>
        <dbReference type="ChEBI" id="CHEBI:57540"/>
    </ligand>
</feature>
<feature type="binding site" evidence="1">
    <location>
        <position position="492"/>
    </location>
    <ligand>
        <name>NAD(+)</name>
        <dbReference type="ChEBI" id="CHEBI:57540"/>
    </ligand>
</feature>
<name>HUTU_SALA4</name>